<proteinExistence type="inferred from homology"/>
<protein>
    <recommendedName>
        <fullName evidence="1">Aspartate--tRNA ligase</fullName>
        <ecNumber evidence="1">6.1.1.12</ecNumber>
    </recommendedName>
    <alternativeName>
        <fullName evidence="1">Aspartyl-tRNA synthetase</fullName>
        <shortName evidence="1">AspRS</shortName>
    </alternativeName>
</protein>
<reference key="1">
    <citation type="submission" date="2007-03" db="EMBL/GenBank/DDBJ databases">
        <title>Complete sequence of Shewanella loihica PV-4.</title>
        <authorList>
            <consortium name="US DOE Joint Genome Institute"/>
            <person name="Copeland A."/>
            <person name="Lucas S."/>
            <person name="Lapidus A."/>
            <person name="Barry K."/>
            <person name="Detter J.C."/>
            <person name="Glavina del Rio T."/>
            <person name="Hammon N."/>
            <person name="Israni S."/>
            <person name="Dalin E."/>
            <person name="Tice H."/>
            <person name="Pitluck S."/>
            <person name="Chain P."/>
            <person name="Malfatti S."/>
            <person name="Shin M."/>
            <person name="Vergez L."/>
            <person name="Schmutz J."/>
            <person name="Larimer F."/>
            <person name="Land M."/>
            <person name="Hauser L."/>
            <person name="Kyrpides N."/>
            <person name="Mikhailova N."/>
            <person name="Romine M.F."/>
            <person name="Serres G."/>
            <person name="Fredrickson J."/>
            <person name="Tiedje J."/>
            <person name="Richardson P."/>
        </authorList>
    </citation>
    <scope>NUCLEOTIDE SEQUENCE [LARGE SCALE GENOMIC DNA]</scope>
    <source>
        <strain>ATCC BAA-1088 / PV-4</strain>
    </source>
</reference>
<evidence type="ECO:0000255" key="1">
    <source>
        <dbReference type="HAMAP-Rule" id="MF_00044"/>
    </source>
</evidence>
<feature type="chain" id="PRO_1000006757" description="Aspartate--tRNA ligase">
    <location>
        <begin position="1"/>
        <end position="592"/>
    </location>
</feature>
<feature type="region of interest" description="Aspartate" evidence="1">
    <location>
        <begin position="197"/>
        <end position="200"/>
    </location>
</feature>
<feature type="binding site" evidence="1">
    <location>
        <position position="173"/>
    </location>
    <ligand>
        <name>L-aspartate</name>
        <dbReference type="ChEBI" id="CHEBI:29991"/>
    </ligand>
</feature>
<feature type="binding site" evidence="1">
    <location>
        <begin position="219"/>
        <end position="221"/>
    </location>
    <ligand>
        <name>ATP</name>
        <dbReference type="ChEBI" id="CHEBI:30616"/>
    </ligand>
</feature>
<feature type="binding site" evidence="1">
    <location>
        <position position="219"/>
    </location>
    <ligand>
        <name>L-aspartate</name>
        <dbReference type="ChEBI" id="CHEBI:29991"/>
    </ligand>
</feature>
<feature type="binding site" evidence="1">
    <location>
        <position position="228"/>
    </location>
    <ligand>
        <name>ATP</name>
        <dbReference type="ChEBI" id="CHEBI:30616"/>
    </ligand>
</feature>
<feature type="binding site" evidence="1">
    <location>
        <position position="449"/>
    </location>
    <ligand>
        <name>L-aspartate</name>
        <dbReference type="ChEBI" id="CHEBI:29991"/>
    </ligand>
</feature>
<feature type="binding site" evidence="1">
    <location>
        <position position="483"/>
    </location>
    <ligand>
        <name>ATP</name>
        <dbReference type="ChEBI" id="CHEBI:30616"/>
    </ligand>
</feature>
<feature type="binding site" evidence="1">
    <location>
        <position position="490"/>
    </location>
    <ligand>
        <name>L-aspartate</name>
        <dbReference type="ChEBI" id="CHEBI:29991"/>
    </ligand>
</feature>
<feature type="binding site" evidence="1">
    <location>
        <begin position="535"/>
        <end position="538"/>
    </location>
    <ligand>
        <name>ATP</name>
        <dbReference type="ChEBI" id="CHEBI:30616"/>
    </ligand>
</feature>
<sequence length="592" mass="65939">MRSHYCGDVNRSHVGEEVTLVGWVNRSRDLGGVVFLDLRDREGVIQVVYDPDLPEVFDVASTLRSEFCVQVKGLVRARPDSQINDQMRTGEIEVLGKALTILNSAPALPINMDKNQHNTEEQRLKYRYLDLRRPEMAERIIFRSKVTSAVRRFLDGNGFLDIETPILTKATPEGARDYLVPSRTYKGQFFALPQSPQLFKQLLMMSGFDRYYQIVKCFRDEDLRADRQPEFTQIDIETSFMTSAQVMDKTEEMVRGLFKELLNVDLGEFPKMTFAEAMRRYGSDKPDLRNPLELVDVADLVKDVDFKVFQEPANDSEGRVAVLCVPGGASLSRKQLDEYGKYVNIYGAKGLAWMKVNELENGLEGIQSPVLKFLSEEVVKGILERTGAANGDLILFGADKANIVAEAMGALRLKVGEDFDLLQGDWKPLWVVDFPMFERTSDGGLHAMHHPFTAPSGITPAELEADPTAAISDAYDMVLNGCELGGGSVRIYDAEMQSAVFRILGINDEEAQEKFGFLLEALKYGTPPHAGLAFGLDRMVMLMTGASSIRDVMAFPKTTTAACPLTNAPGFANPVQLEELGVSVVEAKKEQE</sequence>
<keyword id="KW-0030">Aminoacyl-tRNA synthetase</keyword>
<keyword id="KW-0067">ATP-binding</keyword>
<keyword id="KW-0963">Cytoplasm</keyword>
<keyword id="KW-0436">Ligase</keyword>
<keyword id="KW-0547">Nucleotide-binding</keyword>
<keyword id="KW-0648">Protein biosynthesis</keyword>
<keyword id="KW-1185">Reference proteome</keyword>
<dbReference type="EC" id="6.1.1.12" evidence="1"/>
<dbReference type="EMBL" id="CP000606">
    <property type="protein sequence ID" value="ABO23945.1"/>
    <property type="molecule type" value="Genomic_DNA"/>
</dbReference>
<dbReference type="RefSeq" id="WP_011865877.1">
    <property type="nucleotide sequence ID" value="NC_009092.1"/>
</dbReference>
<dbReference type="SMR" id="A3QEP7"/>
<dbReference type="STRING" id="323850.Shew_2079"/>
<dbReference type="KEGG" id="slo:Shew_2079"/>
<dbReference type="eggNOG" id="COG0173">
    <property type="taxonomic scope" value="Bacteria"/>
</dbReference>
<dbReference type="HOGENOM" id="CLU_014330_3_2_6"/>
<dbReference type="OrthoDB" id="9802326at2"/>
<dbReference type="Proteomes" id="UP000001558">
    <property type="component" value="Chromosome"/>
</dbReference>
<dbReference type="GO" id="GO:0005737">
    <property type="term" value="C:cytoplasm"/>
    <property type="evidence" value="ECO:0007669"/>
    <property type="project" value="UniProtKB-SubCell"/>
</dbReference>
<dbReference type="GO" id="GO:0004815">
    <property type="term" value="F:aspartate-tRNA ligase activity"/>
    <property type="evidence" value="ECO:0007669"/>
    <property type="project" value="UniProtKB-UniRule"/>
</dbReference>
<dbReference type="GO" id="GO:0005524">
    <property type="term" value="F:ATP binding"/>
    <property type="evidence" value="ECO:0007669"/>
    <property type="project" value="UniProtKB-UniRule"/>
</dbReference>
<dbReference type="GO" id="GO:0003676">
    <property type="term" value="F:nucleic acid binding"/>
    <property type="evidence" value="ECO:0007669"/>
    <property type="project" value="InterPro"/>
</dbReference>
<dbReference type="GO" id="GO:0006422">
    <property type="term" value="P:aspartyl-tRNA aminoacylation"/>
    <property type="evidence" value="ECO:0007669"/>
    <property type="project" value="UniProtKB-UniRule"/>
</dbReference>
<dbReference type="CDD" id="cd00777">
    <property type="entry name" value="AspRS_core"/>
    <property type="match status" value="1"/>
</dbReference>
<dbReference type="CDD" id="cd04317">
    <property type="entry name" value="EcAspRS_like_N"/>
    <property type="match status" value="1"/>
</dbReference>
<dbReference type="Gene3D" id="3.30.930.10">
    <property type="entry name" value="Bira Bifunctional Protein, Domain 2"/>
    <property type="match status" value="1"/>
</dbReference>
<dbReference type="Gene3D" id="3.30.1360.30">
    <property type="entry name" value="GAD-like domain"/>
    <property type="match status" value="1"/>
</dbReference>
<dbReference type="Gene3D" id="2.40.50.140">
    <property type="entry name" value="Nucleic acid-binding proteins"/>
    <property type="match status" value="1"/>
</dbReference>
<dbReference type="HAMAP" id="MF_00044">
    <property type="entry name" value="Asp_tRNA_synth_type1"/>
    <property type="match status" value="1"/>
</dbReference>
<dbReference type="InterPro" id="IPR004364">
    <property type="entry name" value="Aa-tRNA-synt_II"/>
</dbReference>
<dbReference type="InterPro" id="IPR006195">
    <property type="entry name" value="aa-tRNA-synth_II"/>
</dbReference>
<dbReference type="InterPro" id="IPR045864">
    <property type="entry name" value="aa-tRNA-synth_II/BPL/LPL"/>
</dbReference>
<dbReference type="InterPro" id="IPR004524">
    <property type="entry name" value="Asp-tRNA-ligase_1"/>
</dbReference>
<dbReference type="InterPro" id="IPR047089">
    <property type="entry name" value="Asp-tRNA-ligase_1_N"/>
</dbReference>
<dbReference type="InterPro" id="IPR002312">
    <property type="entry name" value="Asp/Asn-tRNA-synth_IIb"/>
</dbReference>
<dbReference type="InterPro" id="IPR047090">
    <property type="entry name" value="AspRS_core"/>
</dbReference>
<dbReference type="InterPro" id="IPR004115">
    <property type="entry name" value="GAD-like_sf"/>
</dbReference>
<dbReference type="InterPro" id="IPR029351">
    <property type="entry name" value="GAD_dom"/>
</dbReference>
<dbReference type="InterPro" id="IPR012340">
    <property type="entry name" value="NA-bd_OB-fold"/>
</dbReference>
<dbReference type="InterPro" id="IPR004365">
    <property type="entry name" value="NA-bd_OB_tRNA"/>
</dbReference>
<dbReference type="NCBIfam" id="TIGR00459">
    <property type="entry name" value="aspS_bact"/>
    <property type="match status" value="1"/>
</dbReference>
<dbReference type="NCBIfam" id="NF001750">
    <property type="entry name" value="PRK00476.1"/>
    <property type="match status" value="1"/>
</dbReference>
<dbReference type="PANTHER" id="PTHR22594:SF5">
    <property type="entry name" value="ASPARTATE--TRNA LIGASE, MITOCHONDRIAL"/>
    <property type="match status" value="1"/>
</dbReference>
<dbReference type="PANTHER" id="PTHR22594">
    <property type="entry name" value="ASPARTYL/LYSYL-TRNA SYNTHETASE"/>
    <property type="match status" value="1"/>
</dbReference>
<dbReference type="Pfam" id="PF02938">
    <property type="entry name" value="GAD"/>
    <property type="match status" value="1"/>
</dbReference>
<dbReference type="Pfam" id="PF00152">
    <property type="entry name" value="tRNA-synt_2"/>
    <property type="match status" value="1"/>
</dbReference>
<dbReference type="Pfam" id="PF01336">
    <property type="entry name" value="tRNA_anti-codon"/>
    <property type="match status" value="1"/>
</dbReference>
<dbReference type="PRINTS" id="PR01042">
    <property type="entry name" value="TRNASYNTHASP"/>
</dbReference>
<dbReference type="SUPFAM" id="SSF55681">
    <property type="entry name" value="Class II aaRS and biotin synthetases"/>
    <property type="match status" value="1"/>
</dbReference>
<dbReference type="SUPFAM" id="SSF55261">
    <property type="entry name" value="GAD domain-like"/>
    <property type="match status" value="1"/>
</dbReference>
<dbReference type="SUPFAM" id="SSF50249">
    <property type="entry name" value="Nucleic acid-binding proteins"/>
    <property type="match status" value="1"/>
</dbReference>
<dbReference type="PROSITE" id="PS50862">
    <property type="entry name" value="AA_TRNA_LIGASE_II"/>
    <property type="match status" value="1"/>
</dbReference>
<accession>A3QEP7</accession>
<organism>
    <name type="scientific">Shewanella loihica (strain ATCC BAA-1088 / PV-4)</name>
    <dbReference type="NCBI Taxonomy" id="323850"/>
    <lineage>
        <taxon>Bacteria</taxon>
        <taxon>Pseudomonadati</taxon>
        <taxon>Pseudomonadota</taxon>
        <taxon>Gammaproteobacteria</taxon>
        <taxon>Alteromonadales</taxon>
        <taxon>Shewanellaceae</taxon>
        <taxon>Shewanella</taxon>
    </lineage>
</organism>
<name>SYD_SHELP</name>
<gene>
    <name evidence="1" type="primary">aspS</name>
    <name type="ordered locus">Shew_2079</name>
</gene>
<comment type="function">
    <text evidence="1">Catalyzes the attachment of L-aspartate to tRNA(Asp) in a two-step reaction: L-aspartate is first activated by ATP to form Asp-AMP and then transferred to the acceptor end of tRNA(Asp).</text>
</comment>
<comment type="catalytic activity">
    <reaction evidence="1">
        <text>tRNA(Asp) + L-aspartate + ATP = L-aspartyl-tRNA(Asp) + AMP + diphosphate</text>
        <dbReference type="Rhea" id="RHEA:19649"/>
        <dbReference type="Rhea" id="RHEA-COMP:9660"/>
        <dbReference type="Rhea" id="RHEA-COMP:9678"/>
        <dbReference type="ChEBI" id="CHEBI:29991"/>
        <dbReference type="ChEBI" id="CHEBI:30616"/>
        <dbReference type="ChEBI" id="CHEBI:33019"/>
        <dbReference type="ChEBI" id="CHEBI:78442"/>
        <dbReference type="ChEBI" id="CHEBI:78516"/>
        <dbReference type="ChEBI" id="CHEBI:456215"/>
        <dbReference type="EC" id="6.1.1.12"/>
    </reaction>
</comment>
<comment type="subunit">
    <text evidence="1">Homodimer.</text>
</comment>
<comment type="subcellular location">
    <subcellularLocation>
        <location evidence="1">Cytoplasm</location>
    </subcellularLocation>
</comment>
<comment type="similarity">
    <text evidence="1">Belongs to the class-II aminoacyl-tRNA synthetase family. Type 1 subfamily.</text>
</comment>